<comment type="function">
    <text evidence="1">One of the primary rRNA binding proteins, it binds directly to 16S rRNA where it nucleates assembly of the body of the 30S subunit.</text>
</comment>
<comment type="function">
    <text evidence="1">With S5 and S12 plays an important role in translational accuracy.</text>
</comment>
<comment type="subunit">
    <text evidence="1">Part of the 30S ribosomal subunit. Contacts protein S5. The interaction surface between S4 and S5 is involved in control of translational fidelity.</text>
</comment>
<comment type="similarity">
    <text evidence="1">Belongs to the universal ribosomal protein uS4 family.</text>
</comment>
<reference key="1">
    <citation type="submission" date="2008-06" db="EMBL/GenBank/DDBJ databases">
        <title>Complete sequence of Pelodictyon phaeoclathratiforme BU-1.</title>
        <authorList>
            <consortium name="US DOE Joint Genome Institute"/>
            <person name="Lucas S."/>
            <person name="Copeland A."/>
            <person name="Lapidus A."/>
            <person name="Glavina del Rio T."/>
            <person name="Dalin E."/>
            <person name="Tice H."/>
            <person name="Bruce D."/>
            <person name="Goodwin L."/>
            <person name="Pitluck S."/>
            <person name="Schmutz J."/>
            <person name="Larimer F."/>
            <person name="Land M."/>
            <person name="Hauser L."/>
            <person name="Kyrpides N."/>
            <person name="Mikhailova N."/>
            <person name="Liu Z."/>
            <person name="Li T."/>
            <person name="Zhao F."/>
            <person name="Overmann J."/>
            <person name="Bryant D.A."/>
            <person name="Richardson P."/>
        </authorList>
    </citation>
    <scope>NUCLEOTIDE SEQUENCE [LARGE SCALE GENOMIC DNA]</scope>
    <source>
        <strain>DSM 5477 / BU-1</strain>
    </source>
</reference>
<keyword id="KW-1185">Reference proteome</keyword>
<keyword id="KW-0687">Ribonucleoprotein</keyword>
<keyword id="KW-0689">Ribosomal protein</keyword>
<keyword id="KW-0694">RNA-binding</keyword>
<keyword id="KW-0699">rRNA-binding</keyword>
<gene>
    <name evidence="1" type="primary">rpsD</name>
    <name type="ordered locus">Ppha_0315</name>
</gene>
<organism>
    <name type="scientific">Pelodictyon phaeoclathratiforme (strain DSM 5477 / BU-1)</name>
    <dbReference type="NCBI Taxonomy" id="324925"/>
    <lineage>
        <taxon>Bacteria</taxon>
        <taxon>Pseudomonadati</taxon>
        <taxon>Chlorobiota</taxon>
        <taxon>Chlorobiia</taxon>
        <taxon>Chlorobiales</taxon>
        <taxon>Chlorobiaceae</taxon>
        <taxon>Chlorobium/Pelodictyon group</taxon>
        <taxon>Pelodictyon</taxon>
    </lineage>
</organism>
<accession>B4SBX3</accession>
<name>RS4_PELPB</name>
<feature type="chain" id="PRO_1000140769" description="Small ribosomal subunit protein uS4">
    <location>
        <begin position="1"/>
        <end position="203"/>
    </location>
</feature>
<feature type="domain" description="S4 RNA-binding" evidence="1">
    <location>
        <begin position="93"/>
        <end position="173"/>
    </location>
</feature>
<proteinExistence type="inferred from homology"/>
<dbReference type="EMBL" id="CP001110">
    <property type="protein sequence ID" value="ACF42648.1"/>
    <property type="molecule type" value="Genomic_DNA"/>
</dbReference>
<dbReference type="RefSeq" id="WP_012507143.1">
    <property type="nucleotide sequence ID" value="NC_011060.1"/>
</dbReference>
<dbReference type="SMR" id="B4SBX3"/>
<dbReference type="STRING" id="324925.Ppha_0315"/>
<dbReference type="KEGG" id="pph:Ppha_0315"/>
<dbReference type="eggNOG" id="COG0522">
    <property type="taxonomic scope" value="Bacteria"/>
</dbReference>
<dbReference type="HOGENOM" id="CLU_092403_0_2_10"/>
<dbReference type="OrthoDB" id="9803672at2"/>
<dbReference type="Proteomes" id="UP000002724">
    <property type="component" value="Chromosome"/>
</dbReference>
<dbReference type="GO" id="GO:0015935">
    <property type="term" value="C:small ribosomal subunit"/>
    <property type="evidence" value="ECO:0007669"/>
    <property type="project" value="InterPro"/>
</dbReference>
<dbReference type="GO" id="GO:0019843">
    <property type="term" value="F:rRNA binding"/>
    <property type="evidence" value="ECO:0007669"/>
    <property type="project" value="UniProtKB-UniRule"/>
</dbReference>
<dbReference type="GO" id="GO:0003735">
    <property type="term" value="F:structural constituent of ribosome"/>
    <property type="evidence" value="ECO:0007669"/>
    <property type="project" value="InterPro"/>
</dbReference>
<dbReference type="GO" id="GO:0042274">
    <property type="term" value="P:ribosomal small subunit biogenesis"/>
    <property type="evidence" value="ECO:0007669"/>
    <property type="project" value="TreeGrafter"/>
</dbReference>
<dbReference type="GO" id="GO:0006412">
    <property type="term" value="P:translation"/>
    <property type="evidence" value="ECO:0007669"/>
    <property type="project" value="UniProtKB-UniRule"/>
</dbReference>
<dbReference type="CDD" id="cd00165">
    <property type="entry name" value="S4"/>
    <property type="match status" value="1"/>
</dbReference>
<dbReference type="FunFam" id="3.10.290.10:FF:000001">
    <property type="entry name" value="30S ribosomal protein S4"/>
    <property type="match status" value="1"/>
</dbReference>
<dbReference type="Gene3D" id="1.10.1050.10">
    <property type="entry name" value="Ribosomal Protein S4 Delta 41, Chain A, domain 1"/>
    <property type="match status" value="1"/>
</dbReference>
<dbReference type="Gene3D" id="3.10.290.10">
    <property type="entry name" value="RNA-binding S4 domain"/>
    <property type="match status" value="1"/>
</dbReference>
<dbReference type="HAMAP" id="MF_01306_B">
    <property type="entry name" value="Ribosomal_uS4_B"/>
    <property type="match status" value="1"/>
</dbReference>
<dbReference type="InterPro" id="IPR022801">
    <property type="entry name" value="Ribosomal_uS4"/>
</dbReference>
<dbReference type="InterPro" id="IPR005709">
    <property type="entry name" value="Ribosomal_uS4_bac-type"/>
</dbReference>
<dbReference type="InterPro" id="IPR001912">
    <property type="entry name" value="Ribosomal_uS4_N"/>
</dbReference>
<dbReference type="InterPro" id="IPR002942">
    <property type="entry name" value="S4_RNA-bd"/>
</dbReference>
<dbReference type="InterPro" id="IPR036986">
    <property type="entry name" value="S4_RNA-bd_sf"/>
</dbReference>
<dbReference type="NCBIfam" id="NF003717">
    <property type="entry name" value="PRK05327.1"/>
    <property type="match status" value="1"/>
</dbReference>
<dbReference type="NCBIfam" id="TIGR01017">
    <property type="entry name" value="rpsD_bact"/>
    <property type="match status" value="1"/>
</dbReference>
<dbReference type="PANTHER" id="PTHR11831">
    <property type="entry name" value="30S 40S RIBOSOMAL PROTEIN"/>
    <property type="match status" value="1"/>
</dbReference>
<dbReference type="PANTHER" id="PTHR11831:SF4">
    <property type="entry name" value="SMALL RIBOSOMAL SUBUNIT PROTEIN US4M"/>
    <property type="match status" value="1"/>
</dbReference>
<dbReference type="Pfam" id="PF00163">
    <property type="entry name" value="Ribosomal_S4"/>
    <property type="match status" value="1"/>
</dbReference>
<dbReference type="Pfam" id="PF01479">
    <property type="entry name" value="S4"/>
    <property type="match status" value="1"/>
</dbReference>
<dbReference type="SMART" id="SM01390">
    <property type="entry name" value="Ribosomal_S4"/>
    <property type="match status" value="1"/>
</dbReference>
<dbReference type="SMART" id="SM00363">
    <property type="entry name" value="S4"/>
    <property type="match status" value="1"/>
</dbReference>
<dbReference type="SUPFAM" id="SSF55174">
    <property type="entry name" value="Alpha-L RNA-binding motif"/>
    <property type="match status" value="1"/>
</dbReference>
<dbReference type="PROSITE" id="PS50889">
    <property type="entry name" value="S4"/>
    <property type="match status" value="1"/>
</dbReference>
<evidence type="ECO:0000255" key="1">
    <source>
        <dbReference type="HAMAP-Rule" id="MF_01306"/>
    </source>
</evidence>
<evidence type="ECO:0000305" key="2"/>
<protein>
    <recommendedName>
        <fullName evidence="1">Small ribosomal subunit protein uS4</fullName>
    </recommendedName>
    <alternativeName>
        <fullName evidence="2">30S ribosomal protein S4</fullName>
    </alternativeName>
</protein>
<sequence>MARFRGSITKVSRRLGIALAPKAEKYLERRPFPPGQHGQGRKGKVSEYALQLREKQKMKYLYGILEKQFRNYYKKAVSQRGVTGDNLVKLLERRFDNVVFRAGFAPSRSGARQLVTHGHLLINGKKVDIPSYIVSPSEVIEFRQRSKNMGAVTDSLNKAPESRIPSWIQVDKANQKAVFLSVPERVEVQEPFNEQLVVELYSK</sequence>